<name>YEDA_ECOLI</name>
<reference key="1">
    <citation type="journal article" date="1989" name="Nucleic Acids Res.">
        <title>Nucleotide sequence of the dcm locus of Escherichia coli K12.</title>
        <authorList>
            <person name="Hanck T."/>
            <person name="Gerwin N."/>
            <person name="Fritz H.-J."/>
        </authorList>
    </citation>
    <scope>NUCLEOTIDE SEQUENCE [GENOMIC DNA]</scope>
    <source>
        <strain>K12</strain>
    </source>
</reference>
<reference key="2">
    <citation type="journal article" date="1996" name="DNA Res.">
        <title>A 460-kb DNA sequence of the Escherichia coli K-12 genome corresponding to the 40.1-50.0 min region on the linkage map.</title>
        <authorList>
            <person name="Itoh T."/>
            <person name="Aiba H."/>
            <person name="Baba T."/>
            <person name="Fujita K."/>
            <person name="Hayashi K."/>
            <person name="Inada T."/>
            <person name="Isono K."/>
            <person name="Kasai H."/>
            <person name="Kimura S."/>
            <person name="Kitakawa M."/>
            <person name="Kitagawa M."/>
            <person name="Makino K."/>
            <person name="Miki T."/>
            <person name="Mizobuchi K."/>
            <person name="Mori H."/>
            <person name="Mori T."/>
            <person name="Motomura K."/>
            <person name="Nakade S."/>
            <person name="Nakamura Y."/>
            <person name="Nashimoto H."/>
            <person name="Nishio Y."/>
            <person name="Oshima T."/>
            <person name="Saito N."/>
            <person name="Sampei G."/>
            <person name="Seki Y."/>
            <person name="Sivasundaram S."/>
            <person name="Tagami H."/>
            <person name="Takeda J."/>
            <person name="Takemoto K."/>
            <person name="Wada C."/>
            <person name="Yamamoto Y."/>
            <person name="Horiuchi T."/>
        </authorList>
    </citation>
    <scope>NUCLEOTIDE SEQUENCE [LARGE SCALE GENOMIC DNA]</scope>
    <source>
        <strain>K12 / W3110 / ATCC 27325 / DSM 5911</strain>
    </source>
</reference>
<reference key="3">
    <citation type="journal article" date="1997" name="Science">
        <title>The complete genome sequence of Escherichia coli K-12.</title>
        <authorList>
            <person name="Blattner F.R."/>
            <person name="Plunkett G. III"/>
            <person name="Bloch C.A."/>
            <person name="Perna N.T."/>
            <person name="Burland V."/>
            <person name="Riley M."/>
            <person name="Collado-Vides J."/>
            <person name="Glasner J.D."/>
            <person name="Rode C.K."/>
            <person name="Mayhew G.F."/>
            <person name="Gregor J."/>
            <person name="Davis N.W."/>
            <person name="Kirkpatrick H.A."/>
            <person name="Goeden M.A."/>
            <person name="Rose D.J."/>
            <person name="Mau B."/>
            <person name="Shao Y."/>
        </authorList>
    </citation>
    <scope>NUCLEOTIDE SEQUENCE [LARGE SCALE GENOMIC DNA]</scope>
    <source>
        <strain>K12 / MG1655 / ATCC 47076</strain>
    </source>
</reference>
<reference key="4">
    <citation type="journal article" date="2006" name="Mol. Syst. Biol.">
        <title>Highly accurate genome sequences of Escherichia coli K-12 strains MG1655 and W3110.</title>
        <authorList>
            <person name="Hayashi K."/>
            <person name="Morooka N."/>
            <person name="Yamamoto Y."/>
            <person name="Fujita K."/>
            <person name="Isono K."/>
            <person name="Choi S."/>
            <person name="Ohtsubo E."/>
            <person name="Baba T."/>
            <person name="Wanner B.L."/>
            <person name="Mori H."/>
            <person name="Horiuchi T."/>
        </authorList>
    </citation>
    <scope>NUCLEOTIDE SEQUENCE [LARGE SCALE GENOMIC DNA]</scope>
    <source>
        <strain>K12 / W3110 / ATCC 27325 / DSM 5911</strain>
    </source>
</reference>
<reference key="5">
    <citation type="journal article" date="2005" name="Science">
        <title>Global topology analysis of the Escherichia coli inner membrane proteome.</title>
        <authorList>
            <person name="Daley D.O."/>
            <person name="Rapp M."/>
            <person name="Granseth E."/>
            <person name="Melen K."/>
            <person name="Drew D."/>
            <person name="von Heijne G."/>
        </authorList>
    </citation>
    <scope>TOPOLOGY [LARGE SCALE ANALYSIS]</scope>
    <source>
        <strain>K12 / MG1655 / ATCC 47076</strain>
    </source>
</reference>
<gene>
    <name type="primary">yedA</name>
    <name type="ordered locus">b1959</name>
    <name type="ordered locus">JW1942</name>
</gene>
<feature type="chain" id="PRO_0000108166" description="Uncharacterized inner membrane transporter YedA">
    <location>
        <begin position="1"/>
        <end position="306"/>
    </location>
</feature>
<feature type="topological domain" description="Cytoplasmic" evidence="1">
    <location>
        <begin position="1"/>
        <end position="6"/>
    </location>
</feature>
<feature type="transmembrane region" description="Helical" evidence="1">
    <location>
        <begin position="7"/>
        <end position="27"/>
    </location>
</feature>
<feature type="topological domain" description="Periplasmic" evidence="1">
    <location>
        <begin position="28"/>
        <end position="36"/>
    </location>
</feature>
<feature type="transmembrane region" description="Helical" evidence="1">
    <location>
        <begin position="37"/>
        <end position="57"/>
    </location>
</feature>
<feature type="topological domain" description="Cytoplasmic" evidence="1">
    <location>
        <begin position="58"/>
        <end position="67"/>
    </location>
</feature>
<feature type="transmembrane region" description="Helical" evidence="1">
    <location>
        <begin position="68"/>
        <end position="88"/>
    </location>
</feature>
<feature type="topological domain" description="Periplasmic" evidence="1">
    <location>
        <begin position="89"/>
        <end position="93"/>
    </location>
</feature>
<feature type="transmembrane region" description="Helical" evidence="1">
    <location>
        <begin position="94"/>
        <end position="114"/>
    </location>
</feature>
<feature type="topological domain" description="Cytoplasmic" evidence="1">
    <location>
        <begin position="115"/>
        <end position="125"/>
    </location>
</feature>
<feature type="transmembrane region" description="Helical" evidence="1">
    <location>
        <begin position="126"/>
        <end position="146"/>
    </location>
</feature>
<feature type="topological domain" description="Periplasmic" evidence="1">
    <location>
        <begin position="147"/>
        <end position="148"/>
    </location>
</feature>
<feature type="transmembrane region" description="Helical" evidence="1">
    <location>
        <begin position="149"/>
        <end position="169"/>
    </location>
</feature>
<feature type="topological domain" description="Cytoplasmic" evidence="1">
    <location>
        <begin position="170"/>
        <end position="173"/>
    </location>
</feature>
<feature type="transmembrane region" description="Helical" evidence="1">
    <location>
        <begin position="174"/>
        <end position="194"/>
    </location>
</feature>
<feature type="topological domain" description="Periplasmic" evidence="1">
    <location>
        <begin position="195"/>
        <end position="206"/>
    </location>
</feature>
<feature type="transmembrane region" description="Helical" evidence="1">
    <location>
        <begin position="207"/>
        <end position="227"/>
    </location>
</feature>
<feature type="topological domain" description="Cytoplasmic" evidence="1">
    <location>
        <begin position="228"/>
        <end position="239"/>
    </location>
</feature>
<feature type="transmembrane region" description="Helical" evidence="1">
    <location>
        <begin position="240"/>
        <end position="260"/>
    </location>
</feature>
<feature type="topological domain" description="Periplasmic" evidence="1">
    <location>
        <begin position="261"/>
        <end position="269"/>
    </location>
</feature>
<feature type="transmembrane region" description="Helical" evidence="1">
    <location>
        <begin position="270"/>
        <end position="290"/>
    </location>
</feature>
<feature type="topological domain" description="Cytoplasmic" evidence="1">
    <location>
        <begin position="291"/>
        <end position="306"/>
    </location>
</feature>
<feature type="domain" description="EamA 1">
    <location>
        <begin position="18"/>
        <end position="141"/>
    </location>
</feature>
<feature type="domain" description="EamA 2">
    <location>
        <begin position="160"/>
        <end position="285"/>
    </location>
</feature>
<organism>
    <name type="scientific">Escherichia coli (strain K12)</name>
    <dbReference type="NCBI Taxonomy" id="83333"/>
    <lineage>
        <taxon>Bacteria</taxon>
        <taxon>Pseudomonadati</taxon>
        <taxon>Pseudomonadota</taxon>
        <taxon>Gammaproteobacteria</taxon>
        <taxon>Enterobacterales</taxon>
        <taxon>Enterobacteriaceae</taxon>
        <taxon>Escherichia</taxon>
    </lineage>
</organism>
<evidence type="ECO:0000255" key="1"/>
<evidence type="ECO:0000305" key="2"/>
<accession>P0AA70</accession>
<accession>P09185</accession>
<keyword id="KW-0997">Cell inner membrane</keyword>
<keyword id="KW-1003">Cell membrane</keyword>
<keyword id="KW-0472">Membrane</keyword>
<keyword id="KW-1185">Reference proteome</keyword>
<keyword id="KW-0677">Repeat</keyword>
<keyword id="KW-0812">Transmembrane</keyword>
<keyword id="KW-1133">Transmembrane helix</keyword>
<keyword id="KW-0813">Transport</keyword>
<comment type="subcellular location">
    <subcellularLocation>
        <location>Cell inner membrane</location>
        <topology>Multi-pass membrane protein</topology>
    </subcellularLocation>
</comment>
<comment type="similarity">
    <text evidence="2">Belongs to the EamA transporter family.</text>
</comment>
<dbReference type="EMBL" id="X13330">
    <property type="protein sequence ID" value="CAA31708.1"/>
    <property type="molecule type" value="Genomic_DNA"/>
</dbReference>
<dbReference type="EMBL" id="U00096">
    <property type="protein sequence ID" value="AAC75025.1"/>
    <property type="molecule type" value="Genomic_DNA"/>
</dbReference>
<dbReference type="EMBL" id="AP009048">
    <property type="protein sequence ID" value="BAA15786.1"/>
    <property type="molecule type" value="Genomic_DNA"/>
</dbReference>
<dbReference type="PIR" id="JS0266">
    <property type="entry name" value="JS0266"/>
</dbReference>
<dbReference type="RefSeq" id="NP_416468.1">
    <property type="nucleotide sequence ID" value="NC_000913.3"/>
</dbReference>
<dbReference type="RefSeq" id="WP_001212226.1">
    <property type="nucleotide sequence ID" value="NZ_SSUR01000050.1"/>
</dbReference>
<dbReference type="SMR" id="P0AA70"/>
<dbReference type="BioGRID" id="4261055">
    <property type="interactions" value="9"/>
</dbReference>
<dbReference type="FunCoup" id="P0AA70">
    <property type="interactions" value="534"/>
</dbReference>
<dbReference type="STRING" id="511145.b1959"/>
<dbReference type="TCDB" id="2.A.7.3.22">
    <property type="family name" value="the drug/metabolite transporter (dmt) superfamily"/>
</dbReference>
<dbReference type="PaxDb" id="511145-b1959"/>
<dbReference type="EnsemblBacteria" id="AAC75025">
    <property type="protein sequence ID" value="AAC75025"/>
    <property type="gene ID" value="b1959"/>
</dbReference>
<dbReference type="GeneID" id="86946874"/>
<dbReference type="GeneID" id="946461"/>
<dbReference type="KEGG" id="ecj:JW1942"/>
<dbReference type="KEGG" id="eco:b1959"/>
<dbReference type="KEGG" id="ecoc:C3026_11080"/>
<dbReference type="PATRIC" id="fig|1411691.4.peg.293"/>
<dbReference type="EchoBASE" id="EB1131"/>
<dbReference type="eggNOG" id="COG0697">
    <property type="taxonomic scope" value="Bacteria"/>
</dbReference>
<dbReference type="HOGENOM" id="CLU_033863_5_1_6"/>
<dbReference type="InParanoid" id="P0AA70"/>
<dbReference type="OMA" id="AYGLFFY"/>
<dbReference type="OrthoDB" id="9812547at2"/>
<dbReference type="PhylomeDB" id="P0AA70"/>
<dbReference type="BioCyc" id="EcoCyc:EG11141-MONOMER"/>
<dbReference type="PRO" id="PR:P0AA70"/>
<dbReference type="Proteomes" id="UP000000625">
    <property type="component" value="Chromosome"/>
</dbReference>
<dbReference type="GO" id="GO:0005886">
    <property type="term" value="C:plasma membrane"/>
    <property type="evidence" value="ECO:0000255"/>
    <property type="project" value="EcoCyc"/>
</dbReference>
<dbReference type="GO" id="GO:0009636">
    <property type="term" value="P:response to toxic substance"/>
    <property type="evidence" value="ECO:0000315"/>
    <property type="project" value="EcoCyc"/>
</dbReference>
<dbReference type="InterPro" id="IPR050638">
    <property type="entry name" value="AA-Vitamin_Transporters"/>
</dbReference>
<dbReference type="InterPro" id="IPR004779">
    <property type="entry name" value="CO/AA/NH_transpt"/>
</dbReference>
<dbReference type="InterPro" id="IPR000620">
    <property type="entry name" value="EamA_dom"/>
</dbReference>
<dbReference type="NCBIfam" id="TIGR00950">
    <property type="entry name" value="2A78"/>
    <property type="match status" value="1"/>
</dbReference>
<dbReference type="NCBIfam" id="NF008432">
    <property type="entry name" value="PRK11272.1"/>
    <property type="match status" value="1"/>
</dbReference>
<dbReference type="PANTHER" id="PTHR32322:SF2">
    <property type="entry name" value="EAMA DOMAIN-CONTAINING PROTEIN"/>
    <property type="match status" value="1"/>
</dbReference>
<dbReference type="PANTHER" id="PTHR32322">
    <property type="entry name" value="INNER MEMBRANE TRANSPORTER"/>
    <property type="match status" value="1"/>
</dbReference>
<dbReference type="Pfam" id="PF00892">
    <property type="entry name" value="EamA"/>
    <property type="match status" value="2"/>
</dbReference>
<dbReference type="SUPFAM" id="SSF103481">
    <property type="entry name" value="Multidrug resistance efflux transporter EmrE"/>
    <property type="match status" value="2"/>
</dbReference>
<sequence length="306" mass="32194">MRFRQLLPLFGALFALYIIWGSTYFVIRIGVESWPPLMMAGVRFLAAGILLLAFLLLRGHKLPPLRPLLNAALIGLLLLAVGNGMVTVAEHQNVPSGIAAVVVATVPLFTLCFSRLFGIKTRKLEWVGIAIGLAGIIMLNSGGNLSGNPWGAILILIGSISWAFGSVYGSRITLPVGMMAGAIEMLAAGVVLMIASMIAGEKLTALPSLSGFLAVGYLALFGSIIAINAYMYLIRNVSPALATSYAYVNPVVAVLLGTGLGGETLSKIEWLALGVIVFAVVLVTLGKYLFPAKPVVAPVIQDASSE</sequence>
<protein>
    <recommendedName>
        <fullName>Uncharacterized inner membrane transporter YedA</fullName>
    </recommendedName>
</protein>
<proteinExistence type="evidence at protein level"/>